<comment type="function">
    <text evidence="1 5 8">Serine/threonine protein kinase that plays a role in a variety of different signaling pathways including cytoskeleton regulation, cell migration, growth, proliferation or cell survival. Activation by various effectors including growth factor receptors or active CDC42 and RAC1 results in a conformational change and a subsequent autophosphorylation on several serine and/or threonine residues. Phosphorylates and inactivates the protein phosphatase SSH1, leading to increased inhibitory phosphorylation of the actin binding/depolymerizing factor cofilin. Decreased cofilin activity may lead to stabilization of actin filaments. Phosphorylates LIMK1, a kinase that also inhibits the activity of cofilin. Phosphorylates integrin beta5/ITGB5 and thus regulates cell motility. Phosphorylates ARHGEF2 and activates the downstream target RHOA that plays a role in the regulation of assembly of focal adhesions and actin stress fibers. Stimulates cell survival by phosphorylating the BCL2 antagonist of cell death BAD. Alternatively, inhibits apoptosis by preventing caspase-8 binding to death domain receptors in a kinase independent manner. Plays a role in cell-cycle progression by controlling levels of the cell-cycle regulatory protein CDKN1A and by phosphorylating RAN. Promotes kinase-independent stabilization of RHOU, thereby contributing to focal adhesion disassembly during cell migration (By similarity).</text>
</comment>
<comment type="catalytic activity">
    <reaction>
        <text>L-seryl-[protein] + ATP = O-phospho-L-seryl-[protein] + ADP + H(+)</text>
        <dbReference type="Rhea" id="RHEA:17989"/>
        <dbReference type="Rhea" id="RHEA-COMP:9863"/>
        <dbReference type="Rhea" id="RHEA-COMP:11604"/>
        <dbReference type="ChEBI" id="CHEBI:15378"/>
        <dbReference type="ChEBI" id="CHEBI:29999"/>
        <dbReference type="ChEBI" id="CHEBI:30616"/>
        <dbReference type="ChEBI" id="CHEBI:83421"/>
        <dbReference type="ChEBI" id="CHEBI:456216"/>
        <dbReference type="EC" id="2.7.11.1"/>
    </reaction>
</comment>
<comment type="catalytic activity">
    <reaction>
        <text>L-threonyl-[protein] + ATP = O-phospho-L-threonyl-[protein] + ADP + H(+)</text>
        <dbReference type="Rhea" id="RHEA:46608"/>
        <dbReference type="Rhea" id="RHEA-COMP:11060"/>
        <dbReference type="Rhea" id="RHEA-COMP:11605"/>
        <dbReference type="ChEBI" id="CHEBI:15378"/>
        <dbReference type="ChEBI" id="CHEBI:30013"/>
        <dbReference type="ChEBI" id="CHEBI:30616"/>
        <dbReference type="ChEBI" id="CHEBI:61977"/>
        <dbReference type="ChEBI" id="CHEBI:456216"/>
        <dbReference type="EC" id="2.7.11.1"/>
    </reaction>
</comment>
<comment type="activity regulation">
    <text evidence="1">Inhibited by INKA1; which inhibits the serine/threonine-protein kinase activity by binding PAK4 in a substrate-like manner.</text>
</comment>
<comment type="subunit">
    <text evidence="1 6">Interacts tightly with GTP-bound but not GDP-bound CDC42/p21 and weakly with RAC1 (By similarity). Interacts with FGFR2 and GRB2 (PubMed:12529371). Interacts with INKA1. Interacts with SH3RF2 (By similarity). Interacts with RHOU and PAXI; the PAK4-RHOU complex protects RHOU from ubiquitination and acts as a scaffold to suppport paxillin/PAXI phosphorylation (By similarity).</text>
</comment>
<comment type="subcellular location">
    <subcellularLocation>
        <location evidence="1">Cytoplasm</location>
    </subcellularLocation>
    <text evidence="1">Seems to shuttle between cytoplasmic compartments depending on the activating effector. For example, can be found on the cell periphery after activation of growth-factor or integrin-mediated signaling pathways.</text>
</comment>
<comment type="PTM">
    <text evidence="1 6">Autophosphorylated on serine residues when activated by CDC42/p21 (By similarity). Phosphorylated on tyrosine residues upon stimulation of FGFR2 (PubMed:12529371). Methylated by SETD6.</text>
</comment>
<comment type="PTM">
    <text evidence="1">Polyubiquitinated, leading to its proteasomal degradation.</text>
</comment>
<comment type="disruption phenotype">
    <text evidence="7 9">Mice die at embryonic day 11.5 probably due to a defect in the fetal heart. They show strong defects in neuronal development and axonal outgrowth. Spinal cord motor neurons and interneurons failed to differentiate and migrate to their proper position. Nervous system-specific conditional PAK4 deletion mice display growth retardation and die prematurely.</text>
</comment>
<comment type="similarity">
    <text evidence="10">Belongs to the protein kinase superfamily. STE Ser/Thr protein kinase family. STE20 subfamily.</text>
</comment>
<comment type="sequence caution" evidence="10">
    <conflict type="erroneous initiation">
        <sequence resource="EMBL-CDS" id="BAC98108"/>
    </conflict>
</comment>
<protein>
    <recommendedName>
        <fullName>Serine/threonine-protein kinase PAK 4</fullName>
        <ecNumber>2.7.11.1</ecNumber>
    </recommendedName>
    <alternativeName>
        <fullName>p21-activated kinase 4</fullName>
        <shortName>PAK-4</shortName>
    </alternativeName>
</protein>
<organism>
    <name type="scientific">Mus musculus</name>
    <name type="common">Mouse</name>
    <dbReference type="NCBI Taxonomy" id="10090"/>
    <lineage>
        <taxon>Eukaryota</taxon>
        <taxon>Metazoa</taxon>
        <taxon>Chordata</taxon>
        <taxon>Craniata</taxon>
        <taxon>Vertebrata</taxon>
        <taxon>Euteleostomi</taxon>
        <taxon>Mammalia</taxon>
        <taxon>Eutheria</taxon>
        <taxon>Euarchontoglires</taxon>
        <taxon>Glires</taxon>
        <taxon>Rodentia</taxon>
        <taxon>Myomorpha</taxon>
        <taxon>Muroidea</taxon>
        <taxon>Muridae</taxon>
        <taxon>Murinae</taxon>
        <taxon>Mus</taxon>
        <taxon>Mus</taxon>
    </lineage>
</organism>
<reference key="1">
    <citation type="journal article" date="2003" name="J. Biol. Chem.">
        <title>p21-activated protein kinase 4 (PAK4) interacts with the keratinocyte growth factor receptor and participates in keratinocyte growth factor-mediated inhibition of oxidant-induced cell death.</title>
        <authorList>
            <person name="Lu Y."/>
            <person name="Pan Z.-Z."/>
            <person name="Devaux Y."/>
            <person name="Ray P."/>
        </authorList>
    </citation>
    <scope>NUCLEOTIDE SEQUENCE [MRNA]</scope>
    <scope>INTERACTION WITH FGFR2 AND GRB2</scope>
    <scope>PHOSPHORYLATION AT TYROSINE RESIDUES</scope>
    <source>
        <strain>BALB/cJ</strain>
    </source>
</reference>
<reference key="2">
    <citation type="journal article" date="2003" name="DNA Res.">
        <title>Prediction of the coding sequences of mouse homologues of KIAA gene: III. The complete nucleotide sequences of 500 mouse KIAA-homologous cDNAs identified by screening of terminal sequences of cDNA clones randomly sampled from size-fractionated libraries.</title>
        <authorList>
            <person name="Okazaki N."/>
            <person name="Kikuno R."/>
            <person name="Ohara R."/>
            <person name="Inamoto S."/>
            <person name="Koseki H."/>
            <person name="Hiraoka S."/>
            <person name="Saga Y."/>
            <person name="Nagase T."/>
            <person name="Ohara O."/>
            <person name="Koga H."/>
        </authorList>
    </citation>
    <scope>NUCLEOTIDE SEQUENCE [LARGE SCALE MRNA]</scope>
    <source>
        <tissue>Embryonic tail</tissue>
    </source>
</reference>
<reference key="3">
    <citation type="submission" date="2005-02" db="EMBL/GenBank/DDBJ databases">
        <authorList>
            <person name="Okazaki N."/>
            <person name="Kikuno R."/>
            <person name="Nagase T."/>
            <person name="Ohara O."/>
            <person name="Koga H."/>
        </authorList>
    </citation>
    <scope>SEQUENCE REVISION</scope>
</reference>
<reference key="4">
    <citation type="journal article" date="2005" name="Science">
        <title>The transcriptional landscape of the mammalian genome.</title>
        <authorList>
            <person name="Carninci P."/>
            <person name="Kasukawa T."/>
            <person name="Katayama S."/>
            <person name="Gough J."/>
            <person name="Frith M.C."/>
            <person name="Maeda N."/>
            <person name="Oyama R."/>
            <person name="Ravasi T."/>
            <person name="Lenhard B."/>
            <person name="Wells C."/>
            <person name="Kodzius R."/>
            <person name="Shimokawa K."/>
            <person name="Bajic V.B."/>
            <person name="Brenner S.E."/>
            <person name="Batalov S."/>
            <person name="Forrest A.R."/>
            <person name="Zavolan M."/>
            <person name="Davis M.J."/>
            <person name="Wilming L.G."/>
            <person name="Aidinis V."/>
            <person name="Allen J.E."/>
            <person name="Ambesi-Impiombato A."/>
            <person name="Apweiler R."/>
            <person name="Aturaliya R.N."/>
            <person name="Bailey T.L."/>
            <person name="Bansal M."/>
            <person name="Baxter L."/>
            <person name="Beisel K.W."/>
            <person name="Bersano T."/>
            <person name="Bono H."/>
            <person name="Chalk A.M."/>
            <person name="Chiu K.P."/>
            <person name="Choudhary V."/>
            <person name="Christoffels A."/>
            <person name="Clutterbuck D.R."/>
            <person name="Crowe M.L."/>
            <person name="Dalla E."/>
            <person name="Dalrymple B.P."/>
            <person name="de Bono B."/>
            <person name="Della Gatta G."/>
            <person name="di Bernardo D."/>
            <person name="Down T."/>
            <person name="Engstrom P."/>
            <person name="Fagiolini M."/>
            <person name="Faulkner G."/>
            <person name="Fletcher C.F."/>
            <person name="Fukushima T."/>
            <person name="Furuno M."/>
            <person name="Futaki S."/>
            <person name="Gariboldi M."/>
            <person name="Georgii-Hemming P."/>
            <person name="Gingeras T.R."/>
            <person name="Gojobori T."/>
            <person name="Green R.E."/>
            <person name="Gustincich S."/>
            <person name="Harbers M."/>
            <person name="Hayashi Y."/>
            <person name="Hensch T.K."/>
            <person name="Hirokawa N."/>
            <person name="Hill D."/>
            <person name="Huminiecki L."/>
            <person name="Iacono M."/>
            <person name="Ikeo K."/>
            <person name="Iwama A."/>
            <person name="Ishikawa T."/>
            <person name="Jakt M."/>
            <person name="Kanapin A."/>
            <person name="Katoh M."/>
            <person name="Kawasawa Y."/>
            <person name="Kelso J."/>
            <person name="Kitamura H."/>
            <person name="Kitano H."/>
            <person name="Kollias G."/>
            <person name="Krishnan S.P."/>
            <person name="Kruger A."/>
            <person name="Kummerfeld S.K."/>
            <person name="Kurochkin I.V."/>
            <person name="Lareau L.F."/>
            <person name="Lazarevic D."/>
            <person name="Lipovich L."/>
            <person name="Liu J."/>
            <person name="Liuni S."/>
            <person name="McWilliam S."/>
            <person name="Madan Babu M."/>
            <person name="Madera M."/>
            <person name="Marchionni L."/>
            <person name="Matsuda H."/>
            <person name="Matsuzawa S."/>
            <person name="Miki H."/>
            <person name="Mignone F."/>
            <person name="Miyake S."/>
            <person name="Morris K."/>
            <person name="Mottagui-Tabar S."/>
            <person name="Mulder N."/>
            <person name="Nakano N."/>
            <person name="Nakauchi H."/>
            <person name="Ng P."/>
            <person name="Nilsson R."/>
            <person name="Nishiguchi S."/>
            <person name="Nishikawa S."/>
            <person name="Nori F."/>
            <person name="Ohara O."/>
            <person name="Okazaki Y."/>
            <person name="Orlando V."/>
            <person name="Pang K.C."/>
            <person name="Pavan W.J."/>
            <person name="Pavesi G."/>
            <person name="Pesole G."/>
            <person name="Petrovsky N."/>
            <person name="Piazza S."/>
            <person name="Reed J."/>
            <person name="Reid J.F."/>
            <person name="Ring B.Z."/>
            <person name="Ringwald M."/>
            <person name="Rost B."/>
            <person name="Ruan Y."/>
            <person name="Salzberg S.L."/>
            <person name="Sandelin A."/>
            <person name="Schneider C."/>
            <person name="Schoenbach C."/>
            <person name="Sekiguchi K."/>
            <person name="Semple C.A."/>
            <person name="Seno S."/>
            <person name="Sessa L."/>
            <person name="Sheng Y."/>
            <person name="Shibata Y."/>
            <person name="Shimada H."/>
            <person name="Shimada K."/>
            <person name="Silva D."/>
            <person name="Sinclair B."/>
            <person name="Sperling S."/>
            <person name="Stupka E."/>
            <person name="Sugiura K."/>
            <person name="Sultana R."/>
            <person name="Takenaka Y."/>
            <person name="Taki K."/>
            <person name="Tammoja K."/>
            <person name="Tan S.L."/>
            <person name="Tang S."/>
            <person name="Taylor M.S."/>
            <person name="Tegner J."/>
            <person name="Teichmann S.A."/>
            <person name="Ueda H.R."/>
            <person name="van Nimwegen E."/>
            <person name="Verardo R."/>
            <person name="Wei C.L."/>
            <person name="Yagi K."/>
            <person name="Yamanishi H."/>
            <person name="Zabarovsky E."/>
            <person name="Zhu S."/>
            <person name="Zimmer A."/>
            <person name="Hide W."/>
            <person name="Bult C."/>
            <person name="Grimmond S.M."/>
            <person name="Teasdale R.D."/>
            <person name="Liu E.T."/>
            <person name="Brusic V."/>
            <person name="Quackenbush J."/>
            <person name="Wahlestedt C."/>
            <person name="Mattick J.S."/>
            <person name="Hume D.A."/>
            <person name="Kai C."/>
            <person name="Sasaki D."/>
            <person name="Tomaru Y."/>
            <person name="Fukuda S."/>
            <person name="Kanamori-Katayama M."/>
            <person name="Suzuki M."/>
            <person name="Aoki J."/>
            <person name="Arakawa T."/>
            <person name="Iida J."/>
            <person name="Imamura K."/>
            <person name="Itoh M."/>
            <person name="Kato T."/>
            <person name="Kawaji H."/>
            <person name="Kawagashira N."/>
            <person name="Kawashima T."/>
            <person name="Kojima M."/>
            <person name="Kondo S."/>
            <person name="Konno H."/>
            <person name="Nakano K."/>
            <person name="Ninomiya N."/>
            <person name="Nishio T."/>
            <person name="Okada M."/>
            <person name="Plessy C."/>
            <person name="Shibata K."/>
            <person name="Shiraki T."/>
            <person name="Suzuki S."/>
            <person name="Tagami M."/>
            <person name="Waki K."/>
            <person name="Watahiki A."/>
            <person name="Okamura-Oho Y."/>
            <person name="Suzuki H."/>
            <person name="Kawai J."/>
            <person name="Hayashizaki Y."/>
        </authorList>
    </citation>
    <scope>NUCLEOTIDE SEQUENCE [LARGE SCALE MRNA]</scope>
    <source>
        <strain>NOD</strain>
        <tissue>Embryo</tissue>
        <tissue>Thymus</tissue>
    </source>
</reference>
<reference key="5">
    <citation type="journal article" date="2004" name="Genome Res.">
        <title>The status, quality, and expansion of the NIH full-length cDNA project: the Mammalian Gene Collection (MGC).</title>
        <authorList>
            <consortium name="The MGC Project Team"/>
        </authorList>
    </citation>
    <scope>NUCLEOTIDE SEQUENCE [LARGE SCALE MRNA]</scope>
    <source>
        <strain>FVB/N</strain>
        <tissue>Colon</tissue>
    </source>
</reference>
<reference key="6">
    <citation type="journal article" date="2001" name="J. Biol. Chem.">
        <title>Cytoskeletal changes regulated by the PAK4 serine/threonine kinase are mediated by LIM kinase 1 and cofilin.</title>
        <authorList>
            <person name="Dan C."/>
            <person name="Kelly A."/>
            <person name="Bernard O."/>
            <person name="Minden A."/>
        </authorList>
    </citation>
    <scope>FUNCTION IN PHOSPHORYLATION OF LIMK1</scope>
</reference>
<reference key="7">
    <citation type="journal article" date="2003" name="Mol. Cell. Biol.">
        <title>PAK4 kinase is essential for embryonic viability and for proper neuronal development.</title>
        <authorList>
            <person name="Qu J."/>
            <person name="Li X."/>
            <person name="Novitch B.G."/>
            <person name="Zheng Y."/>
            <person name="Kohn M."/>
            <person name="Xie J.M."/>
            <person name="Kozinn S."/>
            <person name="Bronson R."/>
            <person name="Beg A.A."/>
            <person name="Minden A."/>
        </authorList>
    </citation>
    <scope>DISRUPTION PHENOTYPE</scope>
</reference>
<reference key="8">
    <citation type="journal article" date="2004" name="Mol. Cell. Proteomics">
        <title>Phosphoproteomic analysis of the developing mouse brain.</title>
        <authorList>
            <person name="Ballif B.A."/>
            <person name="Villen J."/>
            <person name="Beausoleil S.A."/>
            <person name="Schwartz D."/>
            <person name="Gygi S.P."/>
        </authorList>
    </citation>
    <scope>PHOSPHORYLATION [LARGE SCALE ANALYSIS] AT SER-476</scope>
    <scope>IDENTIFICATION BY MASS SPECTROMETRY [LARGE SCALE ANALYSIS]</scope>
    <source>
        <tissue>Embryonic brain</tissue>
    </source>
</reference>
<reference key="9">
    <citation type="journal article" date="2007" name="Proc. Natl. Acad. Sci. U.S.A.">
        <title>Large-scale phosphorylation analysis of mouse liver.</title>
        <authorList>
            <person name="Villen J."/>
            <person name="Beausoleil S.A."/>
            <person name="Gerber S.A."/>
            <person name="Gygi S.P."/>
        </authorList>
    </citation>
    <scope>PHOSPHORYLATION [LARGE SCALE ANALYSIS] AT SER-476</scope>
    <scope>IDENTIFICATION BY MASS SPECTROMETRY [LARGE SCALE ANALYSIS]</scope>
    <source>
        <tissue>Liver</tissue>
    </source>
</reference>
<reference key="10">
    <citation type="journal article" date="2009" name="Immunity">
        <title>The phagosomal proteome in interferon-gamma-activated macrophages.</title>
        <authorList>
            <person name="Trost M."/>
            <person name="English L."/>
            <person name="Lemieux S."/>
            <person name="Courcelles M."/>
            <person name="Desjardins M."/>
            <person name="Thibault P."/>
        </authorList>
    </citation>
    <scope>PHOSPHORYLATION [LARGE SCALE ANALYSIS] AT SER-181</scope>
    <scope>IDENTIFICATION BY MASS SPECTROMETRY [LARGE SCALE ANALYSIS]</scope>
</reference>
<reference key="11">
    <citation type="journal article" date="2010" name="Cell">
        <title>A tissue-specific atlas of mouse protein phosphorylation and expression.</title>
        <authorList>
            <person name="Huttlin E.L."/>
            <person name="Jedrychowski M.P."/>
            <person name="Elias J.E."/>
            <person name="Goswami T."/>
            <person name="Rad R."/>
            <person name="Beausoleil S.A."/>
            <person name="Villen J."/>
            <person name="Haas W."/>
            <person name="Sowa M.E."/>
            <person name="Gygi S.P."/>
        </authorList>
    </citation>
    <scope>PHOSPHORYLATION [LARGE SCALE ANALYSIS] AT SER-476</scope>
    <scope>IDENTIFICATION BY MASS SPECTROMETRY [LARGE SCALE ANALYSIS]</scope>
    <source>
        <tissue>Brain</tissue>
        <tissue>Heart</tissue>
        <tissue>Kidney</tissue>
        <tissue>Liver</tissue>
        <tissue>Lung</tissue>
        <tissue>Pancreas</tissue>
        <tissue>Spleen</tissue>
        <tissue>Testis</tissue>
    </source>
</reference>
<reference key="12">
    <citation type="journal article" date="2011" name="J. Cell. Biochem.">
        <title>PAK4 is required for regulation of the cell-cycle regulatory protein p21, and for control of cell-cycle progression.</title>
        <authorList>
            <person name="Nekrasova T."/>
            <person name="Minden A."/>
        </authorList>
    </citation>
    <scope>FUNCTION</scope>
</reference>
<reference key="13">
    <citation type="journal article" date="2011" name="Dev. Biol.">
        <title>A key role for Pak4 in proliferation and differentiation of neural progenitor cells.</title>
        <authorList>
            <person name="Tian Y."/>
            <person name="Lei L."/>
            <person name="Minden A."/>
        </authorList>
    </citation>
    <scope>DISRUPTION PHENOTYPE</scope>
</reference>
<dbReference type="EC" id="2.7.11.1"/>
<dbReference type="EMBL" id="AY217016">
    <property type="protein sequence ID" value="AAO61496.1"/>
    <property type="molecule type" value="mRNA"/>
</dbReference>
<dbReference type="EMBL" id="AK129298">
    <property type="protein sequence ID" value="BAC98108.2"/>
    <property type="status" value="ALT_INIT"/>
    <property type="molecule type" value="mRNA"/>
</dbReference>
<dbReference type="EMBL" id="AK017713">
    <property type="protein sequence ID" value="BAB30889.1"/>
    <property type="molecule type" value="mRNA"/>
</dbReference>
<dbReference type="EMBL" id="AK088512">
    <property type="protein sequence ID" value="BAC40396.1"/>
    <property type="molecule type" value="mRNA"/>
</dbReference>
<dbReference type="EMBL" id="BC048238">
    <property type="protein sequence ID" value="AAH48238.1"/>
    <property type="molecule type" value="mRNA"/>
</dbReference>
<dbReference type="CCDS" id="CCDS21049.1"/>
<dbReference type="RefSeq" id="NP_081746.1">
    <property type="nucleotide sequence ID" value="NM_027470.3"/>
</dbReference>
<dbReference type="RefSeq" id="XP_017167785.1">
    <property type="nucleotide sequence ID" value="XM_017312296.1"/>
</dbReference>
<dbReference type="RefSeq" id="XP_017167786.1">
    <property type="nucleotide sequence ID" value="XM_017312297.1"/>
</dbReference>
<dbReference type="SMR" id="Q8BTW9"/>
<dbReference type="BioGRID" id="214149">
    <property type="interactions" value="4"/>
</dbReference>
<dbReference type="FunCoup" id="Q8BTW9">
    <property type="interactions" value="2041"/>
</dbReference>
<dbReference type="STRING" id="10090.ENSMUSP00000103918"/>
<dbReference type="iPTMnet" id="Q8BTW9"/>
<dbReference type="PhosphoSitePlus" id="Q8BTW9"/>
<dbReference type="jPOST" id="Q8BTW9"/>
<dbReference type="PeptideAtlas" id="Q8BTW9"/>
<dbReference type="ProteomicsDB" id="294376"/>
<dbReference type="Pumba" id="Q8BTW9"/>
<dbReference type="Antibodypedia" id="16732">
    <property type="antibodies" value="632 antibodies from 43 providers"/>
</dbReference>
<dbReference type="DNASU" id="70584"/>
<dbReference type="Ensembl" id="ENSMUST00000032823.5">
    <property type="protein sequence ID" value="ENSMUSP00000032823.5"/>
    <property type="gene ID" value="ENSMUSG00000030602.14"/>
</dbReference>
<dbReference type="Ensembl" id="ENSMUST00000108283.8">
    <property type="protein sequence ID" value="ENSMUSP00000103918.2"/>
    <property type="gene ID" value="ENSMUSG00000030602.14"/>
</dbReference>
<dbReference type="GeneID" id="70584"/>
<dbReference type="KEGG" id="mmu:70584"/>
<dbReference type="UCSC" id="uc009fzh.1">
    <property type="organism name" value="mouse"/>
</dbReference>
<dbReference type="AGR" id="MGI:1917834"/>
<dbReference type="CTD" id="10298"/>
<dbReference type="MGI" id="MGI:1917834">
    <property type="gene designation" value="Pak4"/>
</dbReference>
<dbReference type="VEuPathDB" id="HostDB:ENSMUSG00000030602"/>
<dbReference type="GeneTree" id="ENSGT00940000159792"/>
<dbReference type="HOGENOM" id="CLU_000288_26_6_1"/>
<dbReference type="InParanoid" id="Q8BTW9"/>
<dbReference type="OMA" id="QRDQPGD"/>
<dbReference type="OrthoDB" id="1022360at2759"/>
<dbReference type="PhylomeDB" id="Q8BTW9"/>
<dbReference type="TreeFam" id="TF105352"/>
<dbReference type="Reactome" id="R-MMU-9013149">
    <property type="pathway name" value="RAC1 GTPase cycle"/>
</dbReference>
<dbReference type="Reactome" id="R-MMU-9013404">
    <property type="pathway name" value="RAC2 GTPase cycle"/>
</dbReference>
<dbReference type="Reactome" id="R-MMU-9013406">
    <property type="pathway name" value="RHOQ GTPase cycle"/>
</dbReference>
<dbReference type="Reactome" id="R-MMU-9013407">
    <property type="pathway name" value="RHOH GTPase cycle"/>
</dbReference>
<dbReference type="Reactome" id="R-MMU-9013408">
    <property type="pathway name" value="RHOG GTPase cycle"/>
</dbReference>
<dbReference type="Reactome" id="R-MMU-9013420">
    <property type="pathway name" value="RHOU GTPase cycle"/>
</dbReference>
<dbReference type="Reactome" id="R-MMU-9013423">
    <property type="pathway name" value="RAC3 GTPase cycle"/>
</dbReference>
<dbReference type="Reactome" id="R-MMU-9013424">
    <property type="pathway name" value="RHOV GTPase cycle"/>
</dbReference>
<dbReference type="BioGRID-ORCS" id="70584">
    <property type="hits" value="1 hit in 78 CRISPR screens"/>
</dbReference>
<dbReference type="ChiTaRS" id="Pak4">
    <property type="organism name" value="mouse"/>
</dbReference>
<dbReference type="PRO" id="PR:Q8BTW9"/>
<dbReference type="Proteomes" id="UP000000589">
    <property type="component" value="Chromosome 7"/>
</dbReference>
<dbReference type="RNAct" id="Q8BTW9">
    <property type="molecule type" value="protein"/>
</dbReference>
<dbReference type="Bgee" id="ENSMUSG00000030602">
    <property type="expression patterns" value="Expressed in animal zygote and 221 other cell types or tissues"/>
</dbReference>
<dbReference type="GO" id="GO:0005737">
    <property type="term" value="C:cytoplasm"/>
    <property type="evidence" value="ECO:0007669"/>
    <property type="project" value="UniProtKB-SubCell"/>
</dbReference>
<dbReference type="GO" id="GO:0005524">
    <property type="term" value="F:ATP binding"/>
    <property type="evidence" value="ECO:0007669"/>
    <property type="project" value="UniProtKB-KW"/>
</dbReference>
<dbReference type="GO" id="GO:0004672">
    <property type="term" value="F:protein kinase activity"/>
    <property type="evidence" value="ECO:0000314"/>
    <property type="project" value="MGI"/>
</dbReference>
<dbReference type="GO" id="GO:0106310">
    <property type="term" value="F:protein serine kinase activity"/>
    <property type="evidence" value="ECO:0007669"/>
    <property type="project" value="RHEA"/>
</dbReference>
<dbReference type="GO" id="GO:0004674">
    <property type="term" value="F:protein serine/threonine kinase activity"/>
    <property type="evidence" value="ECO:0000250"/>
    <property type="project" value="UniProtKB"/>
</dbReference>
<dbReference type="GO" id="GO:0006915">
    <property type="term" value="P:apoptotic process"/>
    <property type="evidence" value="ECO:0007669"/>
    <property type="project" value="UniProtKB-KW"/>
</dbReference>
<dbReference type="GO" id="GO:0060996">
    <property type="term" value="P:dendritic spine development"/>
    <property type="evidence" value="ECO:0000316"/>
    <property type="project" value="MGI"/>
</dbReference>
<dbReference type="GO" id="GO:2000352">
    <property type="term" value="P:negative regulation of endothelial cell apoptotic process"/>
    <property type="evidence" value="ECO:0007669"/>
    <property type="project" value="Ensembl"/>
</dbReference>
<dbReference type="GO" id="GO:0045766">
    <property type="term" value="P:positive regulation of angiogenesis"/>
    <property type="evidence" value="ECO:0007669"/>
    <property type="project" value="Ensembl"/>
</dbReference>
<dbReference type="CDD" id="cd01093">
    <property type="entry name" value="CRIB_PAK_like"/>
    <property type="match status" value="1"/>
</dbReference>
<dbReference type="FunFam" id="1.10.510.10:FF:000073">
    <property type="entry name" value="Non-specific serine/threonine protein kinase"/>
    <property type="match status" value="1"/>
</dbReference>
<dbReference type="FunFam" id="3.30.200.20:FF:000141">
    <property type="entry name" value="Non-specific serine/threonine protein kinase"/>
    <property type="match status" value="1"/>
</dbReference>
<dbReference type="FunFam" id="3.90.810.10:FF:000002">
    <property type="entry name" value="Non-specific serine/threonine protein kinase"/>
    <property type="match status" value="1"/>
</dbReference>
<dbReference type="Gene3D" id="3.90.810.10">
    <property type="entry name" value="CRIB domain"/>
    <property type="match status" value="1"/>
</dbReference>
<dbReference type="Gene3D" id="3.30.200.20">
    <property type="entry name" value="Phosphorylase Kinase, domain 1"/>
    <property type="match status" value="1"/>
</dbReference>
<dbReference type="Gene3D" id="1.10.510.10">
    <property type="entry name" value="Transferase(Phosphotransferase) domain 1"/>
    <property type="match status" value="1"/>
</dbReference>
<dbReference type="InterPro" id="IPR000095">
    <property type="entry name" value="CRIB_dom"/>
</dbReference>
<dbReference type="InterPro" id="IPR036936">
    <property type="entry name" value="CRIB_dom_sf"/>
</dbReference>
<dbReference type="InterPro" id="IPR011009">
    <property type="entry name" value="Kinase-like_dom_sf"/>
</dbReference>
<dbReference type="InterPro" id="IPR051931">
    <property type="entry name" value="PAK3-like"/>
</dbReference>
<dbReference type="InterPro" id="IPR033923">
    <property type="entry name" value="PAK_BD"/>
</dbReference>
<dbReference type="InterPro" id="IPR000719">
    <property type="entry name" value="Prot_kinase_dom"/>
</dbReference>
<dbReference type="InterPro" id="IPR017441">
    <property type="entry name" value="Protein_kinase_ATP_BS"/>
</dbReference>
<dbReference type="PANTHER" id="PTHR45832:SF9">
    <property type="entry name" value="NON-SPECIFIC SERINE_THREONINE PROTEIN KINASE"/>
    <property type="match status" value="1"/>
</dbReference>
<dbReference type="PANTHER" id="PTHR45832">
    <property type="entry name" value="SERINE/THREONINE-PROTEIN KINASE SAMKA-RELATED-RELATED"/>
    <property type="match status" value="1"/>
</dbReference>
<dbReference type="Pfam" id="PF00786">
    <property type="entry name" value="PBD"/>
    <property type="match status" value="1"/>
</dbReference>
<dbReference type="Pfam" id="PF00069">
    <property type="entry name" value="Pkinase"/>
    <property type="match status" value="1"/>
</dbReference>
<dbReference type="SMART" id="SM00285">
    <property type="entry name" value="PBD"/>
    <property type="match status" value="1"/>
</dbReference>
<dbReference type="SUPFAM" id="SSF56112">
    <property type="entry name" value="Protein kinase-like (PK-like)"/>
    <property type="match status" value="1"/>
</dbReference>
<dbReference type="PROSITE" id="PS50108">
    <property type="entry name" value="CRIB"/>
    <property type="match status" value="1"/>
</dbReference>
<dbReference type="PROSITE" id="PS00107">
    <property type="entry name" value="PROTEIN_KINASE_ATP"/>
    <property type="match status" value="1"/>
</dbReference>
<dbReference type="PROSITE" id="PS50011">
    <property type="entry name" value="PROTEIN_KINASE_DOM"/>
    <property type="match status" value="1"/>
</dbReference>
<keyword id="KW-0053">Apoptosis</keyword>
<keyword id="KW-0067">ATP-binding</keyword>
<keyword id="KW-0131">Cell cycle</keyword>
<keyword id="KW-0963">Cytoplasm</keyword>
<keyword id="KW-0418">Kinase</keyword>
<keyword id="KW-0488">Methylation</keyword>
<keyword id="KW-0547">Nucleotide-binding</keyword>
<keyword id="KW-0597">Phosphoprotein</keyword>
<keyword id="KW-1185">Reference proteome</keyword>
<keyword id="KW-0723">Serine/threonine-protein kinase</keyword>
<keyword id="KW-0808">Transferase</keyword>
<keyword id="KW-0832">Ubl conjugation</keyword>
<name>PAK4_MOUSE</name>
<feature type="chain" id="PRO_0000086475" description="Serine/threonine-protein kinase PAK 4">
    <location>
        <begin position="1"/>
        <end position="593"/>
    </location>
</feature>
<feature type="domain" description="CRIB" evidence="2">
    <location>
        <begin position="11"/>
        <end position="24"/>
    </location>
</feature>
<feature type="domain" description="Protein kinase" evidence="3">
    <location>
        <begin position="323"/>
        <end position="574"/>
    </location>
</feature>
<feature type="region of interest" description="Linker">
    <location>
        <begin position="25"/>
        <end position="322"/>
    </location>
</feature>
<feature type="region of interest" description="Disordered" evidence="4">
    <location>
        <begin position="95"/>
        <end position="303"/>
    </location>
</feature>
<feature type="compositionally biased region" description="Basic and acidic residues" evidence="4">
    <location>
        <begin position="118"/>
        <end position="133"/>
    </location>
</feature>
<feature type="compositionally biased region" description="Basic and acidic residues" evidence="4">
    <location>
        <begin position="149"/>
        <end position="164"/>
    </location>
</feature>
<feature type="compositionally biased region" description="Polar residues" evidence="4">
    <location>
        <begin position="184"/>
        <end position="197"/>
    </location>
</feature>
<feature type="compositionally biased region" description="Low complexity" evidence="4">
    <location>
        <begin position="238"/>
        <end position="258"/>
    </location>
</feature>
<feature type="compositionally biased region" description="Low complexity" evidence="4">
    <location>
        <begin position="267"/>
        <end position="280"/>
    </location>
</feature>
<feature type="compositionally biased region" description="Pro residues" evidence="4">
    <location>
        <begin position="281"/>
        <end position="292"/>
    </location>
</feature>
<feature type="compositionally biased region" description="Basic and acidic residues" evidence="4">
    <location>
        <begin position="294"/>
        <end position="303"/>
    </location>
</feature>
<feature type="active site" description="Proton acceptor" evidence="3">
    <location>
        <position position="442"/>
    </location>
</feature>
<feature type="binding site" evidence="3">
    <location>
        <begin position="329"/>
        <end position="337"/>
    </location>
    <ligand>
        <name>ATP</name>
        <dbReference type="ChEBI" id="CHEBI:30616"/>
    </ligand>
</feature>
<feature type="binding site" evidence="3">
    <location>
        <position position="352"/>
    </location>
    <ligand>
        <name>ATP</name>
        <dbReference type="ChEBI" id="CHEBI:30616"/>
    </ligand>
</feature>
<feature type="modified residue" description="Phosphoserine" evidence="1">
    <location>
        <position position="41"/>
    </location>
</feature>
<feature type="modified residue" description="N6-methyllysine" evidence="1">
    <location>
        <position position="78"/>
    </location>
</feature>
<feature type="modified residue" description="Phosphoserine" evidence="1">
    <location>
        <position position="104"/>
    </location>
</feature>
<feature type="modified residue" description="Phosphoserine" evidence="1">
    <location>
        <position position="148"/>
    </location>
</feature>
<feature type="modified residue" description="Phosphoserine" evidence="14">
    <location>
        <position position="181"/>
    </location>
</feature>
<feature type="modified residue" description="Phosphothreonine" evidence="1">
    <location>
        <position position="187"/>
    </location>
</feature>
<feature type="modified residue" description="Phosphoserine" evidence="1">
    <location>
        <position position="195"/>
    </location>
</feature>
<feature type="modified residue" description="Phosphothreonine" evidence="1">
    <location>
        <position position="207"/>
    </location>
</feature>
<feature type="modified residue" description="Phosphoserine" evidence="1">
    <location>
        <position position="257"/>
    </location>
</feature>
<feature type="modified residue" description="Phosphoserine" evidence="1">
    <location>
        <position position="266"/>
    </location>
</feature>
<feature type="modified residue" description="Phosphoserine" evidence="1">
    <location>
        <position position="293"/>
    </location>
</feature>
<feature type="modified residue" description="Phosphoserine; by autocatalysis" evidence="12 13 15">
    <location>
        <position position="476"/>
    </location>
</feature>
<feature type="sequence conflict" description="In Ref. 1; AAO61496." evidence="10" ref="1">
    <original>K</original>
    <variation>R</variation>
    <location>
        <position position="5"/>
    </location>
</feature>
<feature type="sequence conflict" description="In Ref. 1; AAO61496." evidence="10" ref="1">
    <original>P</original>
    <variation>L</variation>
    <location>
        <position position="248"/>
    </location>
</feature>
<feature type="sequence conflict" description="In Ref. 4; BAB30889." evidence="10" ref="4">
    <original>T</original>
    <variation>P</variation>
    <location>
        <position position="564"/>
    </location>
</feature>
<proteinExistence type="evidence at protein level"/>
<evidence type="ECO:0000250" key="1">
    <source>
        <dbReference type="UniProtKB" id="O96013"/>
    </source>
</evidence>
<evidence type="ECO:0000255" key="2">
    <source>
        <dbReference type="PROSITE-ProRule" id="PRU00057"/>
    </source>
</evidence>
<evidence type="ECO:0000255" key="3">
    <source>
        <dbReference type="PROSITE-ProRule" id="PRU00159"/>
    </source>
</evidence>
<evidence type="ECO:0000256" key="4">
    <source>
        <dbReference type="SAM" id="MobiDB-lite"/>
    </source>
</evidence>
<evidence type="ECO:0000269" key="5">
    <source>
    </source>
</evidence>
<evidence type="ECO:0000269" key="6">
    <source>
    </source>
</evidence>
<evidence type="ECO:0000269" key="7">
    <source>
    </source>
</evidence>
<evidence type="ECO:0000269" key="8">
    <source>
    </source>
</evidence>
<evidence type="ECO:0000269" key="9">
    <source>
    </source>
</evidence>
<evidence type="ECO:0000305" key="10"/>
<evidence type="ECO:0000312" key="11">
    <source>
        <dbReference type="MGI" id="MGI:1917834"/>
    </source>
</evidence>
<evidence type="ECO:0007744" key="12">
    <source>
    </source>
</evidence>
<evidence type="ECO:0007744" key="13">
    <source>
    </source>
</evidence>
<evidence type="ECO:0007744" key="14">
    <source>
    </source>
</evidence>
<evidence type="ECO:0007744" key="15">
    <source>
    </source>
</evidence>
<accession>Q8BTW9</accession>
<accession>Q6ZPX0</accession>
<accession>Q80Z97</accession>
<accession>Q9CS71</accession>
<sequence>MFGKKKKRVEISAPSNFEHRVHTGFDQHEQKFTGLPRQWQSLIEESARRPKPLIDPACITSIQPGAPKTIVRGSKGAKDGALTLLLDEFENMSVTRSNSLRRESPPPPARAHQENGMLEERAAPARMAPDKAGSRARATGHSEAGSGSGDRRRVGPEKRPKSSRDGPGGPQEASRDKRPLSGPDVSTPQPGSLTSGTKLAAGRPFNTYPRADTDHPPRGAQGEPHTMAPNGPSATGLAAPQSSSSSRPPTRARGAPSPGVLGPHASEPQLAPPARALAAPAVPPAPGPPGPRSPQREPQRVSHEQFRAALQLVVDPGDPRSYLDNFIKIGEGSTGIVCIATVRSSGKLVAVKKMDLRKQQRRELLFNEVVIMRDYRHENVVEMYNSYLVGDELWVVMEFLEGGALTDIVTHTRMNEEQIAAVCLAVLQALAVLHAQGVIHRDIKSDSILLTHDGRVKLSDFGFCAQVSKEVPRRKSLVGTPYWMAPELISRLPYGPEVDIWSLGVMVIEMVDGEPPYFNEPPLKAMKMIRDNLPPRLKNLHKASPSLKGFLDRLLVRDPAQRATAAELLKHPFLTKAGPPASIVPLMRQHRTR</sequence>
<gene>
    <name evidence="11" type="primary">Pak4</name>
    <name type="synonym">Kiaa1142</name>
</gene>